<reference key="1">
    <citation type="journal article" date="2010" name="J. Bacteriol.">
        <title>Genome sequence of the dioxin-mineralizing bacterium Sphingomonas wittichii RW1.</title>
        <authorList>
            <person name="Miller T.R."/>
            <person name="Delcher A.L."/>
            <person name="Salzberg S.L."/>
            <person name="Saunders E."/>
            <person name="Detter J.C."/>
            <person name="Halden R.U."/>
        </authorList>
    </citation>
    <scope>NUCLEOTIDE SEQUENCE [LARGE SCALE GENOMIC DNA]</scope>
    <source>
        <strain>DSM 6014 / CCUG 31198 / JCM 15750 / NBRC 105917 / EY 4224 / RW1</strain>
    </source>
</reference>
<accession>A5VA83</accession>
<dbReference type="EMBL" id="CP000699">
    <property type="protein sequence ID" value="ABQ69199.1"/>
    <property type="molecule type" value="Genomic_DNA"/>
</dbReference>
<dbReference type="SMR" id="A5VA83"/>
<dbReference type="STRING" id="392499.Swit_2846"/>
<dbReference type="PaxDb" id="392499-Swit_2846"/>
<dbReference type="KEGG" id="swi:Swit_2846"/>
<dbReference type="eggNOG" id="COG0445">
    <property type="taxonomic scope" value="Bacteria"/>
</dbReference>
<dbReference type="HOGENOM" id="CLU_007831_2_2_5"/>
<dbReference type="OrthoDB" id="9815560at2"/>
<dbReference type="Proteomes" id="UP000001989">
    <property type="component" value="Chromosome"/>
</dbReference>
<dbReference type="GO" id="GO:0005829">
    <property type="term" value="C:cytosol"/>
    <property type="evidence" value="ECO:0007669"/>
    <property type="project" value="TreeGrafter"/>
</dbReference>
<dbReference type="GO" id="GO:0050660">
    <property type="term" value="F:flavin adenine dinucleotide binding"/>
    <property type="evidence" value="ECO:0007669"/>
    <property type="project" value="UniProtKB-UniRule"/>
</dbReference>
<dbReference type="GO" id="GO:0030488">
    <property type="term" value="P:tRNA methylation"/>
    <property type="evidence" value="ECO:0007669"/>
    <property type="project" value="TreeGrafter"/>
</dbReference>
<dbReference type="GO" id="GO:0002098">
    <property type="term" value="P:tRNA wobble uridine modification"/>
    <property type="evidence" value="ECO:0007669"/>
    <property type="project" value="InterPro"/>
</dbReference>
<dbReference type="FunFam" id="3.50.50.60:FF:000002">
    <property type="entry name" value="tRNA uridine 5-carboxymethylaminomethyl modification enzyme MnmG"/>
    <property type="match status" value="1"/>
</dbReference>
<dbReference type="Gene3D" id="3.50.50.60">
    <property type="entry name" value="FAD/NAD(P)-binding domain"/>
    <property type="match status" value="2"/>
</dbReference>
<dbReference type="Gene3D" id="1.10.150.570">
    <property type="entry name" value="GidA associated domain, C-terminal subdomain"/>
    <property type="match status" value="1"/>
</dbReference>
<dbReference type="HAMAP" id="MF_00129">
    <property type="entry name" value="MnmG_GidA"/>
    <property type="match status" value="1"/>
</dbReference>
<dbReference type="InterPro" id="IPR036188">
    <property type="entry name" value="FAD/NAD-bd_sf"/>
</dbReference>
<dbReference type="InterPro" id="IPR049312">
    <property type="entry name" value="GIDA_C_N"/>
</dbReference>
<dbReference type="InterPro" id="IPR004416">
    <property type="entry name" value="MnmG"/>
</dbReference>
<dbReference type="InterPro" id="IPR002218">
    <property type="entry name" value="MnmG-rel"/>
</dbReference>
<dbReference type="InterPro" id="IPR020595">
    <property type="entry name" value="MnmG-rel_CS"/>
</dbReference>
<dbReference type="InterPro" id="IPR026904">
    <property type="entry name" value="MnmG_C"/>
</dbReference>
<dbReference type="InterPro" id="IPR047001">
    <property type="entry name" value="MnmG_C_subdom"/>
</dbReference>
<dbReference type="InterPro" id="IPR044920">
    <property type="entry name" value="MnmG_C_subdom_sf"/>
</dbReference>
<dbReference type="InterPro" id="IPR040131">
    <property type="entry name" value="MnmG_N"/>
</dbReference>
<dbReference type="NCBIfam" id="TIGR00136">
    <property type="entry name" value="mnmG_gidA"/>
    <property type="match status" value="1"/>
</dbReference>
<dbReference type="PANTHER" id="PTHR11806">
    <property type="entry name" value="GLUCOSE INHIBITED DIVISION PROTEIN A"/>
    <property type="match status" value="1"/>
</dbReference>
<dbReference type="PANTHER" id="PTHR11806:SF0">
    <property type="entry name" value="PROTEIN MTO1 HOMOLOG, MITOCHONDRIAL"/>
    <property type="match status" value="1"/>
</dbReference>
<dbReference type="Pfam" id="PF01134">
    <property type="entry name" value="GIDA"/>
    <property type="match status" value="1"/>
</dbReference>
<dbReference type="Pfam" id="PF21680">
    <property type="entry name" value="GIDA_C_1st"/>
    <property type="match status" value="1"/>
</dbReference>
<dbReference type="Pfam" id="PF13932">
    <property type="entry name" value="SAM_GIDA_C"/>
    <property type="match status" value="1"/>
</dbReference>
<dbReference type="PRINTS" id="PR00411">
    <property type="entry name" value="PNDRDTASEI"/>
</dbReference>
<dbReference type="SMART" id="SM01228">
    <property type="entry name" value="GIDA_assoc_3"/>
    <property type="match status" value="1"/>
</dbReference>
<dbReference type="SUPFAM" id="SSF51905">
    <property type="entry name" value="FAD/NAD(P)-binding domain"/>
    <property type="match status" value="1"/>
</dbReference>
<dbReference type="PROSITE" id="PS01280">
    <property type="entry name" value="GIDA_1"/>
    <property type="match status" value="1"/>
</dbReference>
<dbReference type="PROSITE" id="PS01281">
    <property type="entry name" value="GIDA_2"/>
    <property type="match status" value="1"/>
</dbReference>
<keyword id="KW-0963">Cytoplasm</keyword>
<keyword id="KW-0274">FAD</keyword>
<keyword id="KW-0285">Flavoprotein</keyword>
<keyword id="KW-0520">NAD</keyword>
<keyword id="KW-1185">Reference proteome</keyword>
<keyword id="KW-0819">tRNA processing</keyword>
<proteinExistence type="inferred from homology"/>
<comment type="function">
    <text evidence="1">NAD-binding protein involved in the addition of a carboxymethylaminomethyl (cmnm) group at the wobble position (U34) of certain tRNAs, forming tRNA-cmnm(5)s(2)U34.</text>
</comment>
<comment type="cofactor">
    <cofactor evidence="1">
        <name>FAD</name>
        <dbReference type="ChEBI" id="CHEBI:57692"/>
    </cofactor>
</comment>
<comment type="subunit">
    <text evidence="1">Homodimer. Heterotetramer of two MnmE and two MnmG subunits.</text>
</comment>
<comment type="subcellular location">
    <subcellularLocation>
        <location evidence="1">Cytoplasm</location>
    </subcellularLocation>
</comment>
<comment type="similarity">
    <text evidence="1">Belongs to the MnmG family.</text>
</comment>
<sequence length="619" mass="66046">MADSFDVIVVGGGHAGCEAAAAAARTGARTALVSMRRDMIGAMSCNPAIGGLGKGHLVREVDACDGLIARAADRAAIHYRMLNSSKGAAVQGPRVQADRKLYKAAIHDLLAELPSLEIVEGSAERLLLDDVSRGTSGLVLADGRELKAGAVVLATGTFLNARLHFGMDCRTGGRVGEAAAVGLAEQLRALDLPIARLKTGTPPRLDGRTIDWARLDRQPSDGEGWTFSALTPHRLVPQLACAITRTNQRTHDVIRAGLDRSPLFSGAITGVGPRYCPSIEDKVHRFGDRDGHQIFLEPEGLDDPTVYPNGVSTSLPEDVQLAMLRTVPGLERVEILQPGYAVEYDYIDPRALTAGLALRALPGLFCAGQINGTTGYEEAAAQGLAAGMNAAAFAAGRPEIHFDRATSYIGVMIDDLTLQGVSEPYRMLTARAEYRLRLRADNAGTRLTSWADAHGAISAARRMFHVEREARRIAMADCLDRRIAGSAELIAAGAAVAADHARRSLTEWLRFPEVGDAELTVLAPELVDVPEDVRAEVIQDGRYAPYLARQDQEIARLRADERIGLAVIVDYGAIAGLSNEMVERLNAARPADLAAAGRVRGVTPAALAAIMVHARRLAA</sequence>
<gene>
    <name evidence="1" type="primary">mnmG</name>
    <name evidence="1" type="synonym">gidA</name>
    <name type="ordered locus">Swit_2846</name>
</gene>
<feature type="chain" id="PRO_0000345336" description="tRNA uridine 5-carboxymethylaminomethyl modification enzyme MnmG">
    <location>
        <begin position="1"/>
        <end position="619"/>
    </location>
</feature>
<feature type="binding site" evidence="1">
    <location>
        <begin position="11"/>
        <end position="16"/>
    </location>
    <ligand>
        <name>FAD</name>
        <dbReference type="ChEBI" id="CHEBI:57692"/>
    </ligand>
</feature>
<feature type="binding site" evidence="1">
    <location>
        <begin position="272"/>
        <end position="286"/>
    </location>
    <ligand>
        <name>NAD(+)</name>
        <dbReference type="ChEBI" id="CHEBI:57540"/>
    </ligand>
</feature>
<organism>
    <name type="scientific">Rhizorhabdus wittichii (strain DSM 6014 / CCUG 31198 / JCM 15750 / NBRC 105917 / EY 4224 / RW1)</name>
    <name type="common">Sphingomonas wittichii</name>
    <dbReference type="NCBI Taxonomy" id="392499"/>
    <lineage>
        <taxon>Bacteria</taxon>
        <taxon>Pseudomonadati</taxon>
        <taxon>Pseudomonadota</taxon>
        <taxon>Alphaproteobacteria</taxon>
        <taxon>Sphingomonadales</taxon>
        <taxon>Sphingomonadaceae</taxon>
        <taxon>Rhizorhabdus</taxon>
    </lineage>
</organism>
<protein>
    <recommendedName>
        <fullName evidence="1">tRNA uridine 5-carboxymethylaminomethyl modification enzyme MnmG</fullName>
    </recommendedName>
    <alternativeName>
        <fullName evidence="1">Glucose-inhibited division protein A</fullName>
    </alternativeName>
</protein>
<name>MNMG_RHIWR</name>
<evidence type="ECO:0000255" key="1">
    <source>
        <dbReference type="HAMAP-Rule" id="MF_00129"/>
    </source>
</evidence>